<comment type="function">
    <text evidence="1">Catalyzes the GTP-dependent phosphorylation of the 3'-hydroxyl group of dephosphocoenzyme A to form coenzyme A (CoA).</text>
</comment>
<comment type="catalytic activity">
    <reaction evidence="1">
        <text>3'-dephospho-CoA + GTP = GDP + CoA + H(+)</text>
        <dbReference type="Rhea" id="RHEA:61156"/>
        <dbReference type="ChEBI" id="CHEBI:15378"/>
        <dbReference type="ChEBI" id="CHEBI:37565"/>
        <dbReference type="ChEBI" id="CHEBI:57287"/>
        <dbReference type="ChEBI" id="CHEBI:57328"/>
        <dbReference type="ChEBI" id="CHEBI:58189"/>
        <dbReference type="EC" id="2.7.1.237"/>
    </reaction>
</comment>
<comment type="pathway">
    <text evidence="1">Cofactor biosynthesis; coenzyme A biosynthesis.</text>
</comment>
<comment type="similarity">
    <text evidence="1">Belongs to the GTP-dependent DPCK family.</text>
</comment>
<reference key="1">
    <citation type="journal article" date="2009" name="Proc. Natl. Acad. Sci. U.S.A.">
        <title>Biogeography of the Sulfolobus islandicus pan-genome.</title>
        <authorList>
            <person name="Reno M.L."/>
            <person name="Held N.L."/>
            <person name="Fields C.J."/>
            <person name="Burke P.V."/>
            <person name="Whitaker R.J."/>
        </authorList>
    </citation>
    <scope>NUCLEOTIDE SEQUENCE [LARGE SCALE GENOMIC DNA]</scope>
    <source>
        <strain>L.S.2.15 / Lassen #1</strain>
    </source>
</reference>
<proteinExistence type="inferred from homology"/>
<protein>
    <recommendedName>
        <fullName evidence="1">GTP-dependent dephospho-CoA kinase</fullName>
        <ecNumber evidence="1">2.7.1.237</ecNumber>
    </recommendedName>
    <alternativeName>
        <fullName evidence="1">Dephospho-coenzyme A kinase</fullName>
        <shortName evidence="1">DPCK</shortName>
    </alternativeName>
</protein>
<feature type="chain" id="PRO_1000212166" description="GTP-dependent dephospho-CoA kinase">
    <location>
        <begin position="1"/>
        <end position="178"/>
    </location>
</feature>
<feature type="binding site" evidence="1">
    <location>
        <position position="55"/>
    </location>
    <ligand>
        <name>GTP</name>
        <dbReference type="ChEBI" id="CHEBI:37565"/>
    </ligand>
</feature>
<feature type="binding site" evidence="1">
    <location>
        <position position="57"/>
    </location>
    <ligand>
        <name>GTP</name>
        <dbReference type="ChEBI" id="CHEBI:37565"/>
    </ligand>
</feature>
<feature type="binding site" evidence="1">
    <location>
        <position position="74"/>
    </location>
    <ligand>
        <name>GTP</name>
        <dbReference type="ChEBI" id="CHEBI:37565"/>
    </ligand>
</feature>
<feature type="binding site" evidence="1">
    <location>
        <position position="76"/>
    </location>
    <ligand>
        <name>GTP</name>
        <dbReference type="ChEBI" id="CHEBI:37565"/>
    </ligand>
</feature>
<feature type="binding site" evidence="1">
    <location>
        <position position="127"/>
    </location>
    <ligand>
        <name>GTP</name>
        <dbReference type="ChEBI" id="CHEBI:37565"/>
    </ligand>
</feature>
<sequence>MEIRDNNKVNLCFAFDNLRKELSRPYGILFTNNKLFLDFVSKSIQQGFKVITVGDYVSRVLEENGIIPFLEVIDGKTKRSIPQRTIVKNKEYRVTNEAGKIRFEIFEIMENILKDRDGGVVFVNGEEDLLVIPVTLSADNGDIVIYGQPNAGAVVIIVNEMIRWRVRDILEKAVVKEC</sequence>
<gene>
    <name type="ordered locus">LS215_1816</name>
</gene>
<dbReference type="EC" id="2.7.1.237" evidence="1"/>
<dbReference type="EMBL" id="CP001399">
    <property type="protein sequence ID" value="ACP35812.1"/>
    <property type="molecule type" value="Genomic_DNA"/>
</dbReference>
<dbReference type="RefSeq" id="WP_012713909.1">
    <property type="nucleotide sequence ID" value="NC_012589.1"/>
</dbReference>
<dbReference type="SMR" id="C3MQZ9"/>
<dbReference type="GeneID" id="7799455"/>
<dbReference type="KEGG" id="sis:LS215_1816"/>
<dbReference type="HOGENOM" id="CLU_120795_1_0_2"/>
<dbReference type="OrthoDB" id="15447at2157"/>
<dbReference type="UniPathway" id="UPA00241"/>
<dbReference type="Proteomes" id="UP000001747">
    <property type="component" value="Chromosome"/>
</dbReference>
<dbReference type="GO" id="GO:0005525">
    <property type="term" value="F:GTP binding"/>
    <property type="evidence" value="ECO:0007669"/>
    <property type="project" value="UniProtKB-UniRule"/>
</dbReference>
<dbReference type="GO" id="GO:0016301">
    <property type="term" value="F:kinase activity"/>
    <property type="evidence" value="ECO:0007669"/>
    <property type="project" value="UniProtKB-UniRule"/>
</dbReference>
<dbReference type="GO" id="GO:0015937">
    <property type="term" value="P:coenzyme A biosynthetic process"/>
    <property type="evidence" value="ECO:0007669"/>
    <property type="project" value="UniProtKB-UniRule"/>
</dbReference>
<dbReference type="HAMAP" id="MF_00590">
    <property type="entry name" value="Dephospho_CoA_kinase_GTP_dep"/>
    <property type="match status" value="1"/>
</dbReference>
<dbReference type="InterPro" id="IPR007164">
    <property type="entry name" value="GTP-dep_dephospho-CoA_kin"/>
</dbReference>
<dbReference type="PANTHER" id="PTHR40732:SF1">
    <property type="entry name" value="GTP-DEPENDENT DEPHOSPHO-COA KINASE"/>
    <property type="match status" value="1"/>
</dbReference>
<dbReference type="PANTHER" id="PTHR40732">
    <property type="entry name" value="UPF0218 PROTEIN TK1697"/>
    <property type="match status" value="1"/>
</dbReference>
<dbReference type="Pfam" id="PF04019">
    <property type="entry name" value="DUF359"/>
    <property type="match status" value="1"/>
</dbReference>
<dbReference type="PIRSF" id="PIRSF006533">
    <property type="entry name" value="UCP006533"/>
    <property type="match status" value="1"/>
</dbReference>
<evidence type="ECO:0000255" key="1">
    <source>
        <dbReference type="HAMAP-Rule" id="MF_00590"/>
    </source>
</evidence>
<accession>C3MQZ9</accession>
<keyword id="KW-0173">Coenzyme A biosynthesis</keyword>
<keyword id="KW-0342">GTP-binding</keyword>
<keyword id="KW-0418">Kinase</keyword>
<keyword id="KW-0547">Nucleotide-binding</keyword>
<keyword id="KW-0808">Transferase</keyword>
<name>DPCKG_SACI2</name>
<organism>
    <name type="scientific">Saccharolobus islandicus (strain L.S.2.15 / Lassen #1)</name>
    <name type="common">Sulfolobus islandicus</name>
    <dbReference type="NCBI Taxonomy" id="429572"/>
    <lineage>
        <taxon>Archaea</taxon>
        <taxon>Thermoproteota</taxon>
        <taxon>Thermoprotei</taxon>
        <taxon>Sulfolobales</taxon>
        <taxon>Sulfolobaceae</taxon>
        <taxon>Saccharolobus</taxon>
    </lineage>
</organism>